<keyword id="KW-0511">Multifunctional enzyme</keyword>
<keyword id="KW-0596">Phosphopantetheine</keyword>
<keyword id="KW-0597">Phosphoprotein</keyword>
<keyword id="KW-1185">Reference proteome</keyword>
<keyword id="KW-0808">Transferase</keyword>
<sequence>MAPNKKTILLFGDQTDSWVDGIDRLYQDAASIPWLQSFLDDLTHTFKTHTVGMDAVLRNSLGDFANLQELAEKYRYTTDDVGMAQAFLIYAVRAGILLKWAKYEPSLLSTDENQPEWVGISGGLISLSVLAVAETFEKLYEACLEVAGLLARLCRFTSVKSRSMEDRSGAWGWTVLGIGANELRNALDQYQQSMGIPPIKRAQVAVTGHRWNTIVGPPSILQLIVKECPAIRSLPKNELNIHALQHTVVTSRADLDYIVGDSTLLSQPLSLTFTLWGMDDPRAHYTTWGDMLRAICSQALSRPLDITHVVDQLSSKLRSFPQLDVKSIGPCSHLSYLTNVLKSAGRTVSVADDHPPSTPPKQLPGRIAIVGMAGRGPGSDNVEEFWNVIMSKLDLCEEIPEDRFNLSEFYRSKHDSGCTTTTKFGCFMDKPGHFDNRFFHISPREALLMDPGHRQFLMTTYEALEMAGYSDGATRAVDPARIATFFGQCNDDWHDVSHHTLGCDAYTLQGVQRAFGAGRIAFQFKWEGPTYSLDSACASTASSIHLACTSLLAKETDMAVAGAANVVGYPHSWTSLSKSGVLSDTGNCKTFRDDADGYCRADFVGTVVLKRLEDAIAHNDNILAVVAASGRNHSGNSSSITTSDAKAQEKLYRKMMHNARVSPNDISYVEMHGTGTKVGDPAEMGALASLFSHRRTPKPVVVGGVKANVGHSESKQAAGVASLLKCIMMFQKNILPPQAGMPHALNPNFPPLSEINIEIPSEPSTFESPVSQPRRILLNNFDAAGGNACILLEDFGNNMVKKSDPRVHHTVVTSSRTQASYHGNKAKLLQWLRQNPGARIEDVAYTTTARRTHHPIRFAVTASSTQELISKLEADTADSPAAKESPVVFVFTGQGSHYAGMGSELYETSPVFRETVNLCATICEEQNFPPFLDLITQSDSEMSDKTTLEVQLAVLTLEIGLAALWRSIGIQPSVVIGHSLGEYAALHVSGVLSLADVLYLVGQRALLILQRCEVNTSAMLSVAMPVTDTHAFLEAQADPSCEIACVNSTNASVISGSIENITELQAGLKARSKMLSVPYGFHSSQMDPILADYAALAGGVTFSEPKIPVASTLLASLVDTSGTFHAGYMARQCRQPVNFVGALEAIQSNYSDPIWLEIGPSQVCSSFVRATLSPPPSKILSTLDKGTNAWLSLGKCMSSLYKHGATIDWLALHQPYVDNLSLLNLPTYAWDLKEFWIRYTETKDQLPTSTTNGHETFKANISTCAQQVVEHISPPNMKVTFRASLSDPGFKALIDGHRLRDRSVCPGSVFSEAGLAAVTYVLQLHHSKSLKLPALVLRNLSLKRPLTYDLVGPDGELITVVAPGGSSNDTFKVAWKASKGNVSYSLGDCMVAACDGQLIQARWDKVSYFIRSRVDEIVASSKSGISHRLQPQILYGLFANTVKYDAAFKCIQEAYISSDFQEAAAVIVLNSDPVGTKFVASPYWGESLVHLAGFVVNSNPSRQSHDTTFMMDGFESFEQTVIPEPGKPYHTYVRVTGNESASVVCDVYIFDDDKLIMHCAGLHFHEVENAVLDQLLGGTNTSNTTRDQPAPIMSRKEVPKPVDTTEKVEAVSNDSQSDAHVLDSILKIISKETGSDLADFQDDTLIADLGVDSIMAIEIASQVTEETGMDLLPSFIIDYPAIGDLRRVFAPKSTHISLDNDLSRPSLVDDTSQALQSSGSESFDQPPTSVTSTSDSGSIVKIDLGPDVDSPAPKIKITLLQGRPGNGRTPFYLIADGTGTIATYIHLPQFKSQIPIYGIDSPFLRCPTRFTTDVGITGAARFITEALMKAQPEGTFVLGGFSGGAMLAYEVCRQLAAANRKVDSLMLIDMCSPRSKTVEDKNDIGWAIFESISRQNGLWRSTDMTRQHLQAIFAAVATYHPQPLKASERPKRTAIIWAEKGMIDRCAGDSELMQKLAKRGIPTEPYPKFMEDSELGPVAWGLPHKTKNDLGPNGWERYVGDALCLSMPADHLEMPMPGHVHLLHEKMTRAFEFFNEAG</sequence>
<dbReference type="EC" id="2.3.1.-" evidence="13"/>
<dbReference type="EMBL" id="DQ019316">
    <property type="protein sequence ID" value="ABB90282.1"/>
    <property type="status" value="ALT_SEQ"/>
    <property type="molecule type" value="Genomic_DNA"/>
</dbReference>
<dbReference type="EMBL" id="DS231663">
    <property type="protein sequence ID" value="ESU07824.1"/>
    <property type="status" value="ALT_SEQ"/>
    <property type="molecule type" value="Genomic_DNA"/>
</dbReference>
<dbReference type="EMBL" id="HG970332">
    <property type="protein sequence ID" value="CEF74679.1"/>
    <property type="molecule type" value="Genomic_DNA"/>
</dbReference>
<dbReference type="RefSeq" id="XP_011318309.1">
    <property type="nucleotide sequence ID" value="XM_011320007.1"/>
</dbReference>
<dbReference type="SMR" id="A0A098D6U0"/>
<dbReference type="STRING" id="229533.A0A098D6U0"/>
<dbReference type="ESTHER" id="gibze-q2vlj3">
    <property type="family name" value="Thioesterase"/>
</dbReference>
<dbReference type="GeneID" id="23549774"/>
<dbReference type="KEGG" id="fgr:FGSG_02395"/>
<dbReference type="VEuPathDB" id="FungiDB:FGRAMPH1_01G05749"/>
<dbReference type="eggNOG" id="KOG1202">
    <property type="taxonomic scope" value="Eukaryota"/>
</dbReference>
<dbReference type="InParanoid" id="A0A098D6U0"/>
<dbReference type="OrthoDB" id="25693at110618"/>
<dbReference type="PHI-base" id="PHI:713"/>
<dbReference type="Proteomes" id="UP000070720">
    <property type="component" value="Chromosome 1"/>
</dbReference>
<dbReference type="GO" id="GO:0004315">
    <property type="term" value="F:3-oxoacyl-[acyl-carrier-protein] synthase activity"/>
    <property type="evidence" value="ECO:0007669"/>
    <property type="project" value="InterPro"/>
</dbReference>
<dbReference type="GO" id="GO:0004312">
    <property type="term" value="F:fatty acid synthase activity"/>
    <property type="evidence" value="ECO:0007669"/>
    <property type="project" value="TreeGrafter"/>
</dbReference>
<dbReference type="GO" id="GO:0031177">
    <property type="term" value="F:phosphopantetheine binding"/>
    <property type="evidence" value="ECO:0007669"/>
    <property type="project" value="InterPro"/>
</dbReference>
<dbReference type="GO" id="GO:0016218">
    <property type="term" value="F:polyketide synthase activity"/>
    <property type="evidence" value="ECO:0000314"/>
    <property type="project" value="UniProt"/>
</dbReference>
<dbReference type="GO" id="GO:0006633">
    <property type="term" value="P:fatty acid biosynthetic process"/>
    <property type="evidence" value="ECO:0007669"/>
    <property type="project" value="InterPro"/>
</dbReference>
<dbReference type="GO" id="GO:0106150">
    <property type="term" value="P:zearalenone biosynthetic process"/>
    <property type="evidence" value="ECO:0000314"/>
    <property type="project" value="UniProt"/>
</dbReference>
<dbReference type="CDD" id="cd00833">
    <property type="entry name" value="PKS"/>
    <property type="match status" value="1"/>
</dbReference>
<dbReference type="Gene3D" id="3.30.70.3290">
    <property type="match status" value="1"/>
</dbReference>
<dbReference type="Gene3D" id="3.40.47.10">
    <property type="match status" value="1"/>
</dbReference>
<dbReference type="Gene3D" id="1.10.1200.10">
    <property type="entry name" value="ACP-like"/>
    <property type="match status" value="1"/>
</dbReference>
<dbReference type="Gene3D" id="3.40.50.1820">
    <property type="entry name" value="alpha/beta hydrolase"/>
    <property type="match status" value="1"/>
</dbReference>
<dbReference type="Gene3D" id="3.30.70.250">
    <property type="entry name" value="Malonyl-CoA ACP transacylase, ACP-binding"/>
    <property type="match status" value="1"/>
</dbReference>
<dbReference type="Gene3D" id="3.40.366.10">
    <property type="entry name" value="Malonyl-Coenzyme A Acyl Carrier Protein, domain 2"/>
    <property type="match status" value="1"/>
</dbReference>
<dbReference type="Gene3D" id="3.10.129.110">
    <property type="entry name" value="Polyketide synthase dehydratase"/>
    <property type="match status" value="1"/>
</dbReference>
<dbReference type="InterPro" id="IPR029058">
    <property type="entry name" value="AB_hydrolase_fold"/>
</dbReference>
<dbReference type="InterPro" id="IPR001227">
    <property type="entry name" value="Ac_transferase_dom_sf"/>
</dbReference>
<dbReference type="InterPro" id="IPR036736">
    <property type="entry name" value="ACP-like_sf"/>
</dbReference>
<dbReference type="InterPro" id="IPR014043">
    <property type="entry name" value="Acyl_transferase_dom"/>
</dbReference>
<dbReference type="InterPro" id="IPR016035">
    <property type="entry name" value="Acyl_Trfase/lysoPLipase"/>
</dbReference>
<dbReference type="InterPro" id="IPR018201">
    <property type="entry name" value="Ketoacyl_synth_AS"/>
</dbReference>
<dbReference type="InterPro" id="IPR014031">
    <property type="entry name" value="Ketoacyl_synth_C"/>
</dbReference>
<dbReference type="InterPro" id="IPR014030">
    <property type="entry name" value="Ketoacyl_synth_N"/>
</dbReference>
<dbReference type="InterPro" id="IPR016036">
    <property type="entry name" value="Malonyl_transacylase_ACP-bd"/>
</dbReference>
<dbReference type="InterPro" id="IPR020841">
    <property type="entry name" value="PKS_Beta-ketoAc_synthase_dom"/>
</dbReference>
<dbReference type="InterPro" id="IPR042104">
    <property type="entry name" value="PKS_dehydratase_sf"/>
</dbReference>
<dbReference type="InterPro" id="IPR049900">
    <property type="entry name" value="PKS_mFAS_DH"/>
</dbReference>
<dbReference type="InterPro" id="IPR050091">
    <property type="entry name" value="PKS_NRPS_Biosynth_Enz"/>
</dbReference>
<dbReference type="InterPro" id="IPR020806">
    <property type="entry name" value="PKS_PP-bd"/>
</dbReference>
<dbReference type="InterPro" id="IPR009081">
    <property type="entry name" value="PP-bd_ACP"/>
</dbReference>
<dbReference type="InterPro" id="IPR006162">
    <property type="entry name" value="Ppantetheine_attach_site"/>
</dbReference>
<dbReference type="InterPro" id="IPR030918">
    <property type="entry name" value="PT_fungal_PKS"/>
</dbReference>
<dbReference type="InterPro" id="IPR032088">
    <property type="entry name" value="SAT"/>
</dbReference>
<dbReference type="InterPro" id="IPR001031">
    <property type="entry name" value="Thioesterase"/>
</dbReference>
<dbReference type="InterPro" id="IPR016039">
    <property type="entry name" value="Thiolase-like"/>
</dbReference>
<dbReference type="NCBIfam" id="TIGR04532">
    <property type="entry name" value="PT_fungal_PKS"/>
    <property type="match status" value="1"/>
</dbReference>
<dbReference type="PANTHER" id="PTHR43775">
    <property type="entry name" value="FATTY ACID SYNTHASE"/>
    <property type="match status" value="1"/>
</dbReference>
<dbReference type="PANTHER" id="PTHR43775:SF37">
    <property type="entry name" value="SI:DKEY-61P9.11"/>
    <property type="match status" value="1"/>
</dbReference>
<dbReference type="Pfam" id="PF00698">
    <property type="entry name" value="Acyl_transf_1"/>
    <property type="match status" value="1"/>
</dbReference>
<dbReference type="Pfam" id="PF22621">
    <property type="entry name" value="CurL-like_PKS_C"/>
    <property type="match status" value="1"/>
</dbReference>
<dbReference type="Pfam" id="PF00109">
    <property type="entry name" value="ketoacyl-synt"/>
    <property type="match status" value="1"/>
</dbReference>
<dbReference type="Pfam" id="PF02801">
    <property type="entry name" value="Ketoacyl-synt_C"/>
    <property type="match status" value="1"/>
</dbReference>
<dbReference type="Pfam" id="PF00550">
    <property type="entry name" value="PP-binding"/>
    <property type="match status" value="1"/>
</dbReference>
<dbReference type="Pfam" id="PF16073">
    <property type="entry name" value="SAT"/>
    <property type="match status" value="1"/>
</dbReference>
<dbReference type="Pfam" id="PF00975">
    <property type="entry name" value="Thioesterase"/>
    <property type="match status" value="1"/>
</dbReference>
<dbReference type="SMART" id="SM00827">
    <property type="entry name" value="PKS_AT"/>
    <property type="match status" value="1"/>
</dbReference>
<dbReference type="SMART" id="SM00825">
    <property type="entry name" value="PKS_KS"/>
    <property type="match status" value="1"/>
</dbReference>
<dbReference type="SMART" id="SM00823">
    <property type="entry name" value="PKS_PP"/>
    <property type="match status" value="1"/>
</dbReference>
<dbReference type="SUPFAM" id="SSF47336">
    <property type="entry name" value="ACP-like"/>
    <property type="match status" value="1"/>
</dbReference>
<dbReference type="SUPFAM" id="SSF53474">
    <property type="entry name" value="alpha/beta-Hydrolases"/>
    <property type="match status" value="1"/>
</dbReference>
<dbReference type="SUPFAM" id="SSF52151">
    <property type="entry name" value="FabD/lysophospholipase-like"/>
    <property type="match status" value="1"/>
</dbReference>
<dbReference type="SUPFAM" id="SSF55048">
    <property type="entry name" value="Probable ACP-binding domain of malonyl-CoA ACP transacylase"/>
    <property type="match status" value="1"/>
</dbReference>
<dbReference type="SUPFAM" id="SSF53901">
    <property type="entry name" value="Thiolase-like"/>
    <property type="match status" value="1"/>
</dbReference>
<dbReference type="PROSITE" id="PS50075">
    <property type="entry name" value="CARRIER"/>
    <property type="match status" value="1"/>
</dbReference>
<dbReference type="PROSITE" id="PS00606">
    <property type="entry name" value="KS3_1"/>
    <property type="match status" value="1"/>
</dbReference>
<dbReference type="PROSITE" id="PS52004">
    <property type="entry name" value="KS3_2"/>
    <property type="match status" value="1"/>
</dbReference>
<dbReference type="PROSITE" id="PS00012">
    <property type="entry name" value="PHOSPHOPANTETHEINE"/>
    <property type="match status" value="1"/>
</dbReference>
<dbReference type="PROSITE" id="PS52019">
    <property type="entry name" value="PKS_MFAS_DH"/>
    <property type="match status" value="1"/>
</dbReference>
<accession>A0A098D6U0</accession>
<accession>A0A0E0RTV4</accession>
<accession>I1RFC4</accession>
<accession>Q2VLJ3</accession>
<feature type="chain" id="PRO_0000438784" description="Non-reducing polyketide synthase ZEA1">
    <location>
        <begin position="1"/>
        <end position="2038"/>
    </location>
</feature>
<feature type="domain" description="Ketosynthase family 3 (KS3)" evidence="5 18">
    <location>
        <begin position="364"/>
        <end position="794"/>
    </location>
</feature>
<feature type="domain" description="PKS/mFAS DH" evidence="6">
    <location>
        <begin position="1254"/>
        <end position="1573"/>
    </location>
</feature>
<feature type="domain" description="Carrier" evidence="4 18">
    <location>
        <begin position="1616"/>
        <end position="1693"/>
    </location>
</feature>
<feature type="region of interest" description="N-terminal acylcarrier protein transacylase domain (SAT)" evidence="3 18">
    <location>
        <begin position="9"/>
        <end position="246"/>
    </location>
</feature>
<feature type="region of interest" description="Malonyl-CoA:ACP transacylase (MAT) domain" evidence="3 18">
    <location>
        <begin position="888"/>
        <end position="1172"/>
    </location>
</feature>
<feature type="region of interest" description="Product template (PT) domain" evidence="3 18">
    <location>
        <begin position="1221"/>
        <end position="1572"/>
    </location>
</feature>
<feature type="region of interest" description="N-terminal hotdog fold" evidence="6">
    <location>
        <begin position="1254"/>
        <end position="1405"/>
    </location>
</feature>
<feature type="region of interest" description="C-terminal hotdog fold" evidence="6">
    <location>
        <begin position="1425"/>
        <end position="1573"/>
    </location>
</feature>
<feature type="region of interest" description="Disordered" evidence="8">
    <location>
        <begin position="1700"/>
        <end position="1738"/>
    </location>
</feature>
<feature type="region of interest" description="Thioesterase (TE) domain" evidence="3 18">
    <location>
        <begin position="1778"/>
        <end position="1882"/>
    </location>
</feature>
<feature type="compositionally biased region" description="Polar residues" evidence="8">
    <location>
        <begin position="1709"/>
        <end position="1737"/>
    </location>
</feature>
<feature type="active site" description="For beta-ketoacyl synthase activity" evidence="5">
    <location>
        <position position="537"/>
    </location>
</feature>
<feature type="active site" description="For beta-ketoacyl synthase activity" evidence="5">
    <location>
        <position position="672"/>
    </location>
</feature>
<feature type="active site" description="For beta-ketoacyl synthase activity" evidence="5">
    <location>
        <position position="711"/>
    </location>
</feature>
<feature type="active site" description="For acyl/malonyl transferase activity" evidence="7">
    <location>
        <position position="979"/>
    </location>
</feature>
<feature type="active site" description="For thioesterase activity" evidence="1">
    <location>
        <position position="2021"/>
    </location>
</feature>
<feature type="modified residue" description="O-(pantetheine 4'-phosphoryl)serine" evidence="4">
    <location>
        <position position="1653"/>
    </location>
</feature>
<evidence type="ECO:0000250" key="1">
    <source>
        <dbReference type="UniProtKB" id="Q5ATJ7"/>
    </source>
</evidence>
<evidence type="ECO:0000250" key="2">
    <source>
        <dbReference type="UniProtKB" id="Q5B0D0"/>
    </source>
</evidence>
<evidence type="ECO:0000255" key="3"/>
<evidence type="ECO:0000255" key="4">
    <source>
        <dbReference type="PROSITE-ProRule" id="PRU00258"/>
    </source>
</evidence>
<evidence type="ECO:0000255" key="5">
    <source>
        <dbReference type="PROSITE-ProRule" id="PRU01348"/>
    </source>
</evidence>
<evidence type="ECO:0000255" key="6">
    <source>
        <dbReference type="PROSITE-ProRule" id="PRU01363"/>
    </source>
</evidence>
<evidence type="ECO:0000255" key="7">
    <source>
        <dbReference type="PROSITE-ProRule" id="PRU10022"/>
    </source>
</evidence>
<evidence type="ECO:0000256" key="8">
    <source>
        <dbReference type="SAM" id="MobiDB-lite"/>
    </source>
</evidence>
<evidence type="ECO:0000269" key="9">
    <source>
    </source>
</evidence>
<evidence type="ECO:0000269" key="10">
    <source>
    </source>
</evidence>
<evidence type="ECO:0000269" key="11">
    <source>
    </source>
</evidence>
<evidence type="ECO:0000269" key="12">
    <source>
    </source>
</evidence>
<evidence type="ECO:0000269" key="13">
    <source>
    </source>
</evidence>
<evidence type="ECO:0000303" key="14">
    <source>
    </source>
</evidence>
<evidence type="ECO:0000303" key="15">
    <source>
    </source>
</evidence>
<evidence type="ECO:0000303" key="16">
    <source>
    </source>
</evidence>
<evidence type="ECO:0000305" key="17"/>
<evidence type="ECO:0000305" key="18">
    <source>
    </source>
</evidence>
<comment type="function">
    <text evidence="9 11 12 13">Non-reducing polyketide synthase; part of the gene cluster that mediates the biosynthesis of zearalenone (ZEA), a nonsteroid estrogen that is a contaminant of cereal grains and causes estrogenic disorders in humans and animals (PubMed:16262793, PubMed:16517624, PubMed:18427109). The ZEA backbone is synthesized from a single acetyl-CoA molecule and eight malonyl-CoA molecules (PubMed:16262793, PubMed:16517624, PubMed:18427109). The reducing polyketide synthase ZEA2 is proposed to synthesize a reduced hexaketide intermediate by using different combinations of its reductive domains during each round of condensation (PubMed:16262793, PubMed:16517624, PubMed:16751498, PubMed:18427109). The hexaketide thioester is then transacylated to the non-reducing polyketide synthase ZEA1 and is further condensed with three malonyl-CoAs without reductive tailoring to yield a mixed reduced/unreduced nonaketide (PubMed:16262793, PubMed:16517624, PubMed:18427109). ZEA1 must be able to interact with ZEA2 to facilitate starter-unit acyltransfer and initiate polyketide biosynthesis (PubMed:18427109). ZEA1 also mediates the required C2-C7 cyclization to form the resorcylate core and catalyzes the formation of the macrolactone (PubMed:18427109). ZEA1 exhibits broad starter-unit specificities toward fatty acyl-CoAs ranging in sizes between C6 and C16 and displays the highest activity toward decanoyl-CoA (PubMed:18427109). ZEB1 is then responsible for the chemical conversion of beta-zearalenonol (beta-ZOL) to ZEA in the biosynthetic pathway (PubMed:16262793).</text>
</comment>
<comment type="pathway">
    <text evidence="9">Mycotoxin biosynthesis.</text>
</comment>
<comment type="induction">
    <text evidence="9">Expression is positively regulated by the zearalenone biosynthesis specific transcription factor ZEB2 (PubMed:16262793). Conditions for carbon-, nitrogen-, or phosphorus-starvations lead to very low expression (PubMed:16262793). Increase in pH results in gradual reduction of the gene expression (PubMed:16262793).</text>
</comment>
<comment type="domain">
    <text evidence="2">Multidomain protein; including a starter unit:ACP transacylase (SAT) that selects the starter unit; a ketosynthase (KS) that catalyzes repeated decarboxylative condensation to elongate the polyketide backbone; a malonyl-CoA:ACP transacylase (MAT) that selects and transfers the extender unit malonyl-CoA; a product template (PT) domain that controls the immediate cyclization regioselectivity of the reactive polyketide backbone; and an acyl-carrier protein (ACP) that serves as the tether of the growing and completed polyketide via its phosphopantetheinyl arm (By similarity).</text>
</comment>
<comment type="domain">
    <text evidence="1">The release of the polyketide chain from the non-reducing polyketide synthase is mediated by the thioesterase (TE) domain localized at the C-ter of the protein (By similarity).</text>
</comment>
<comment type="disruption phenotype">
    <text evidence="9 10">Results in the loss of zearalenone production but still produces beta-zearalenonol (PubMed:16262793, PubMed:16517624).</text>
</comment>
<comment type="sequence caution" evidence="17">
    <conflict type="erroneous gene model prediction">
        <sequence resource="EMBL-CDS" id="ABB90282"/>
    </conflict>
</comment>
<comment type="sequence caution" evidence="17">
    <conflict type="erroneous gene model prediction">
        <sequence resource="EMBL-CDS" id="ESU07824"/>
    </conflict>
</comment>
<gene>
    <name evidence="15" type="primary">ZEA1</name>
    <name evidence="14" type="synonym">PKS13</name>
    <name type="ORF">FGRAMPH1_01T05749</name>
    <name type="ORF">FGSG_02395</name>
</gene>
<protein>
    <recommendedName>
        <fullName evidence="17">Non-reducing polyketide synthase ZEA1</fullName>
        <ecNumber evidence="13">2.3.1.-</ecNumber>
    </recommendedName>
    <alternativeName>
        <fullName evidence="16">Macrolactone megasynthetase</fullName>
    </alternativeName>
    <alternativeName>
        <fullName evidence="14">Polyketide synthase 13</fullName>
        <shortName evidence="14">PKS13</shortName>
    </alternativeName>
    <alternativeName>
        <fullName evidence="15">Zearalenone biosynthesis polyketide synthase 1</fullName>
    </alternativeName>
</protein>
<organism>
    <name type="scientific">Gibberella zeae (strain ATCC MYA-4620 / CBS 123657 / FGSC 9075 / NRRL 31084 / PH-1)</name>
    <name type="common">Wheat head blight fungus</name>
    <name type="synonym">Fusarium graminearum</name>
    <dbReference type="NCBI Taxonomy" id="229533"/>
    <lineage>
        <taxon>Eukaryota</taxon>
        <taxon>Fungi</taxon>
        <taxon>Dikarya</taxon>
        <taxon>Ascomycota</taxon>
        <taxon>Pezizomycotina</taxon>
        <taxon>Sordariomycetes</taxon>
        <taxon>Hypocreomycetidae</taxon>
        <taxon>Hypocreales</taxon>
        <taxon>Nectriaceae</taxon>
        <taxon>Fusarium</taxon>
    </lineage>
</organism>
<name>ZEA1_GIBZE</name>
<reference key="1">
    <citation type="journal article" date="2005" name="Mol. Microbiol.">
        <title>Two different polyketide synthase genes are required for synthesis of zearalenone in Gibberella zeae.</title>
        <authorList>
            <person name="Kim Y.T."/>
            <person name="Lee Y.R."/>
            <person name="Jin J."/>
            <person name="Han K.H."/>
            <person name="Kim H."/>
            <person name="Kim J.C."/>
            <person name="Lee T."/>
            <person name="Yun S.H."/>
            <person name="Lee Y.W."/>
        </authorList>
    </citation>
    <scope>NUCLEOTIDE SEQUENCE [GENOMIC DNA]</scope>
    <scope>FUNCTION</scope>
    <scope>DISRUPTION PHENOTYPE</scope>
    <scope>INDUCTION</scope>
    <scope>PATHWAY</scope>
    <source>
        <strain>ATCC MYA-4620 / CBS 123657 / FGSC 9075 / NRRL 31084 / PH-1</strain>
    </source>
</reference>
<reference key="2">
    <citation type="journal article" date="2007" name="Science">
        <title>The Fusarium graminearum genome reveals a link between localized polymorphism and pathogen specialization.</title>
        <authorList>
            <person name="Cuomo C.A."/>
            <person name="Gueldener U."/>
            <person name="Xu J.-R."/>
            <person name="Trail F."/>
            <person name="Turgeon B.G."/>
            <person name="Di Pietro A."/>
            <person name="Walton J.D."/>
            <person name="Ma L.-J."/>
            <person name="Baker S.E."/>
            <person name="Rep M."/>
            <person name="Adam G."/>
            <person name="Antoniw J."/>
            <person name="Baldwin T."/>
            <person name="Calvo S.E."/>
            <person name="Chang Y.-L."/>
            <person name="DeCaprio D."/>
            <person name="Gale L.R."/>
            <person name="Gnerre S."/>
            <person name="Goswami R.S."/>
            <person name="Hammond-Kosack K."/>
            <person name="Harris L.J."/>
            <person name="Hilburn K."/>
            <person name="Kennell J.C."/>
            <person name="Kroken S."/>
            <person name="Magnuson J.K."/>
            <person name="Mannhaupt G."/>
            <person name="Mauceli E.W."/>
            <person name="Mewes H.-W."/>
            <person name="Mitterbauer R."/>
            <person name="Muehlbauer G."/>
            <person name="Muensterkoetter M."/>
            <person name="Nelson D."/>
            <person name="O'Donnell K."/>
            <person name="Ouellet T."/>
            <person name="Qi W."/>
            <person name="Quesneville H."/>
            <person name="Roncero M.I.G."/>
            <person name="Seong K.-Y."/>
            <person name="Tetko I.V."/>
            <person name="Urban M."/>
            <person name="Waalwijk C."/>
            <person name="Ward T.J."/>
            <person name="Yao J."/>
            <person name="Birren B.W."/>
            <person name="Kistler H.C."/>
        </authorList>
    </citation>
    <scope>NUCLEOTIDE SEQUENCE [LARGE SCALE GENOMIC DNA]</scope>
    <source>
        <strain>ATCC MYA-4620 / CBS 123657 / FGSC 9075 / NRRL 31084 / PH-1</strain>
    </source>
</reference>
<reference key="3">
    <citation type="journal article" date="2010" name="Nature">
        <title>Comparative genomics reveals mobile pathogenicity chromosomes in Fusarium.</title>
        <authorList>
            <person name="Ma L.-J."/>
            <person name="van der Does H.C."/>
            <person name="Borkovich K.A."/>
            <person name="Coleman J.J."/>
            <person name="Daboussi M.-J."/>
            <person name="Di Pietro A."/>
            <person name="Dufresne M."/>
            <person name="Freitag M."/>
            <person name="Grabherr M."/>
            <person name="Henrissat B."/>
            <person name="Houterman P.M."/>
            <person name="Kang S."/>
            <person name="Shim W.-B."/>
            <person name="Woloshuk C."/>
            <person name="Xie X."/>
            <person name="Xu J.-R."/>
            <person name="Antoniw J."/>
            <person name="Baker S.E."/>
            <person name="Bluhm B.H."/>
            <person name="Breakspear A."/>
            <person name="Brown D.W."/>
            <person name="Butchko R.A.E."/>
            <person name="Chapman S."/>
            <person name="Coulson R."/>
            <person name="Coutinho P.M."/>
            <person name="Danchin E.G.J."/>
            <person name="Diener A."/>
            <person name="Gale L.R."/>
            <person name="Gardiner D.M."/>
            <person name="Goff S."/>
            <person name="Hammond-Kosack K.E."/>
            <person name="Hilburn K."/>
            <person name="Hua-Van A."/>
            <person name="Jonkers W."/>
            <person name="Kazan K."/>
            <person name="Kodira C.D."/>
            <person name="Koehrsen M."/>
            <person name="Kumar L."/>
            <person name="Lee Y.-H."/>
            <person name="Li L."/>
            <person name="Manners J.M."/>
            <person name="Miranda-Saavedra D."/>
            <person name="Mukherjee M."/>
            <person name="Park G."/>
            <person name="Park J."/>
            <person name="Park S.-Y."/>
            <person name="Proctor R.H."/>
            <person name="Regev A."/>
            <person name="Ruiz-Roldan M.C."/>
            <person name="Sain D."/>
            <person name="Sakthikumar S."/>
            <person name="Sykes S."/>
            <person name="Schwartz D.C."/>
            <person name="Turgeon B.G."/>
            <person name="Wapinski I."/>
            <person name="Yoder O."/>
            <person name="Young S."/>
            <person name="Zeng Q."/>
            <person name="Zhou S."/>
            <person name="Galagan J."/>
            <person name="Cuomo C.A."/>
            <person name="Kistler H.C."/>
            <person name="Rep M."/>
        </authorList>
    </citation>
    <scope>GENOME REANNOTATION</scope>
    <source>
        <strain>ATCC MYA-4620 / CBS 123657 / FGSC 9075 / NRRL 31084 / PH-1</strain>
    </source>
</reference>
<reference key="4">
    <citation type="journal article" date="2015" name="BMC Genomics">
        <title>The completed genome sequence of the pathogenic ascomycete fungus Fusarium graminearum.</title>
        <authorList>
            <person name="King R."/>
            <person name="Urban M."/>
            <person name="Hammond-Kosack M.C.U."/>
            <person name="Hassani-Pak K."/>
            <person name="Hammond-Kosack K.E."/>
        </authorList>
    </citation>
    <scope>NUCLEOTIDE SEQUENCE [LARGE SCALE GENOMIC DNA]</scope>
    <source>
        <strain>ATCC MYA-4620 / CBS 123657 / FGSC 9075 / NRRL 31084 / PH-1</strain>
    </source>
</reference>
<reference key="5">
    <citation type="journal article" date="2006" name="Appl. Environ. Microbiol.">
        <title>Characterization of two polyketide synthase genes involved in zearalenone biosynthesis in Gibberella zeae.</title>
        <authorList>
            <person name="Gaffoor I."/>
            <person name="Trail F."/>
        </authorList>
    </citation>
    <scope>FUNCTION</scope>
    <scope>DISRUPTION PHENOTYPE</scope>
</reference>
<reference key="6">
    <citation type="journal article" date="2006" name="Appl. Environ. Microbiol.">
        <title>The PKS4 gene of Fusarium graminearum is essential for zearalenone production.</title>
        <authorList>
            <person name="Lysoee E."/>
            <person name="Klemsdal S.S."/>
            <person name="Bone K.R."/>
            <person name="Frandsen R.J."/>
            <person name="Johansen T."/>
            <person name="Thrane U."/>
            <person name="Giese H."/>
        </authorList>
    </citation>
    <scope>FUNCTION</scope>
</reference>
<reference key="7">
    <citation type="journal article" date="2008" name="Proc. Natl. Acad. Sci. U.S.A.">
        <title>A polyketide macrolactone synthase from the filamentous fungus Gibberella zeae.</title>
        <authorList>
            <person name="Zhou H."/>
            <person name="Zhan J."/>
            <person name="Watanabe K."/>
            <person name="Xie X."/>
            <person name="Tang Y."/>
        </authorList>
    </citation>
    <scope>FUNCTION</scope>
    <scope>CATALYTIC ACTIVITY</scope>
</reference>
<proteinExistence type="evidence at protein level"/>